<organism>
    <name type="scientific">Bacillus cereus</name>
    <dbReference type="NCBI Taxonomy" id="1396"/>
    <lineage>
        <taxon>Bacteria</taxon>
        <taxon>Bacillati</taxon>
        <taxon>Bacillota</taxon>
        <taxon>Bacilli</taxon>
        <taxon>Bacillales</taxon>
        <taxon>Bacillaceae</taxon>
        <taxon>Bacillus</taxon>
        <taxon>Bacillus cereus group</taxon>
    </lineage>
</organism>
<protein>
    <recommendedName>
        <fullName>Small, acid-soluble spore protein 1</fullName>
        <shortName>SASP</shortName>
    </recommendedName>
</protein>
<proteinExistence type="inferred from homology"/>
<gene>
    <name type="primary">sasP-1</name>
</gene>
<comment type="function">
    <text>SASP are bound to spore DNA. They are double-stranded DNA-binding proteins that cause DNA to change to an a-like conformation. They protect the DNA backbone from chemical and enzymatic cleavage and are thus involved in dormant spore's high resistance to UV light.</text>
</comment>
<comment type="miscellaneous">
    <text>SASP are degraded in the first minutes of spore germination and provide amino acids for both new protein synthesis and metabolism.</text>
</comment>
<comment type="similarity">
    <text evidence="1">Belongs to the alpha/beta-type SASP family.</text>
</comment>
<name>SAS1_BACCE</name>
<sequence length="70" mass="7466">MGKNNSGSRNEVLVRGAEQALDQMKYEIAQEFGVQLGADTTARSNGSVGGEITKRLVAMAEQQLGGRANR</sequence>
<reference key="1">
    <citation type="journal article" date="1986" name="J. Bacteriol.">
        <title>Cloning and nucleotide sequencing of genes for small, acid-soluble spore proteins of Bacillus cereus, Bacillus stearothermophilus, and 'Thermoactinomyces thalpophilus'.</title>
        <authorList>
            <person name="Loshon C.A."/>
            <person name="Fliss E.R."/>
            <person name="Setlow B."/>
            <person name="Foerster H.F."/>
            <person name="Setlow P."/>
        </authorList>
    </citation>
    <scope>NUCLEOTIDE SEQUENCE [GENOMIC DNA]</scope>
</reference>
<accession>P0A4F3</accession>
<accession>P06551</accession>
<evidence type="ECO:0000305" key="1"/>
<keyword id="KW-0238">DNA-binding</keyword>
<keyword id="KW-0749">Sporulation</keyword>
<feature type="chain" id="PRO_0000196288" description="Small, acid-soluble spore protein 1">
    <location>
        <begin position="1"/>
        <end position="70"/>
    </location>
</feature>
<feature type="site" description="Cleavage; by spore protease">
    <location>
        <begin position="27"/>
        <end position="28"/>
    </location>
</feature>
<dbReference type="EMBL" id="M13059">
    <property type="protein sequence ID" value="AAA22738.1"/>
    <property type="molecule type" value="Genomic_DNA"/>
</dbReference>
<dbReference type="PIR" id="A25234">
    <property type="entry name" value="A25234"/>
</dbReference>
<dbReference type="SMR" id="P0A4F3"/>
<dbReference type="eggNOG" id="ENOG5032YCI">
    <property type="taxonomic scope" value="Bacteria"/>
</dbReference>
<dbReference type="OMA" id="QQMGGTR"/>
<dbReference type="GO" id="GO:0003690">
    <property type="term" value="F:double-stranded DNA binding"/>
    <property type="evidence" value="ECO:0007669"/>
    <property type="project" value="InterPro"/>
</dbReference>
<dbReference type="GO" id="GO:0006265">
    <property type="term" value="P:DNA topological change"/>
    <property type="evidence" value="ECO:0007669"/>
    <property type="project" value="InterPro"/>
</dbReference>
<dbReference type="GO" id="GO:0030435">
    <property type="term" value="P:sporulation resulting in formation of a cellular spore"/>
    <property type="evidence" value="ECO:0007669"/>
    <property type="project" value="UniProtKB-KW"/>
</dbReference>
<dbReference type="Gene3D" id="6.10.10.80">
    <property type="entry name" value="Small, acid-soluble spore protein, alpha/beta type-like"/>
    <property type="match status" value="1"/>
</dbReference>
<dbReference type="InterPro" id="IPR001448">
    <property type="entry name" value="SASP_alpha/beta-type"/>
</dbReference>
<dbReference type="InterPro" id="IPR018126">
    <property type="entry name" value="SASP_alpha/beta-type_CS"/>
</dbReference>
<dbReference type="InterPro" id="IPR050847">
    <property type="entry name" value="SASP_DNA-binding"/>
</dbReference>
<dbReference type="InterPro" id="IPR038300">
    <property type="entry name" value="SASP_sf_alpha/beta"/>
</dbReference>
<dbReference type="PANTHER" id="PTHR36107">
    <property type="entry name" value="SMALL, ACID-SOLUBLE SPORE PROTEIN A"/>
    <property type="match status" value="1"/>
</dbReference>
<dbReference type="PANTHER" id="PTHR36107:SF1">
    <property type="entry name" value="SMALL, ACID-SOLUBLE SPORE PROTEIN A"/>
    <property type="match status" value="1"/>
</dbReference>
<dbReference type="Pfam" id="PF00269">
    <property type="entry name" value="SASP"/>
    <property type="match status" value="1"/>
</dbReference>
<dbReference type="PROSITE" id="PS00304">
    <property type="entry name" value="SASP_1"/>
    <property type="match status" value="1"/>
</dbReference>
<dbReference type="PROSITE" id="PS00684">
    <property type="entry name" value="SASP_2"/>
    <property type="match status" value="1"/>
</dbReference>